<accession>P10067</accession>
<name>CRGD_RAT</name>
<comment type="function">
    <text>Crystallins are the dominant structural components of the vertebrate eye lens.</text>
</comment>
<comment type="tissue specificity">
    <text evidence="2">Detected in the superior olivary complex and fibers of the ventral aoustic stria of the auditory hindbrain.</text>
</comment>
<comment type="domain">
    <text>Has a two-domain beta-structure, folded into four very similar Greek key motifs.</text>
</comment>
<comment type="miscellaneous">
    <text>There are six different gamma crystallins identified in rat lens.</text>
</comment>
<comment type="similarity">
    <text evidence="3">Belongs to the beta/gamma-crystallin family.</text>
</comment>
<sequence>MGKITFYEDRGFQGRHYECSTDHSNLQPYFSRCNSVRVDSGCWMLYEQPNFTGCQYFLRRGDYPDYQQWMGFSDSVRSCRLIPHAGSHRIRLYEREDYRGQMVEFTEDCPSLQDRFHFNEIYSLNVLEGCWVLYEMTNYRGRQYLLRPGEYRRYHDWGAMNARVGSLRRVMDFY</sequence>
<proteinExistence type="evidence at transcript level"/>
<evidence type="ECO:0000255" key="1">
    <source>
        <dbReference type="PROSITE-ProRule" id="PRU00028"/>
    </source>
</evidence>
<evidence type="ECO:0000269" key="2">
    <source>
    </source>
</evidence>
<evidence type="ECO:0000305" key="3"/>
<dbReference type="EMBL" id="M19359">
    <property type="protein sequence ID" value="AAA40984.1"/>
    <property type="molecule type" value="Genomic_DNA"/>
</dbReference>
<dbReference type="EMBL" id="X57169">
    <property type="protein sequence ID" value="CAA40458.1"/>
    <property type="molecule type" value="mRNA"/>
</dbReference>
<dbReference type="PIR" id="D24060">
    <property type="entry name" value="D24060"/>
</dbReference>
<dbReference type="RefSeq" id="NP_149086.1">
    <property type="nucleotide sequence ID" value="NM_033095.2"/>
</dbReference>
<dbReference type="SMR" id="P10067"/>
<dbReference type="FunCoup" id="P10067">
    <property type="interactions" value="5"/>
</dbReference>
<dbReference type="STRING" id="10116.ENSRNOP00000051301"/>
<dbReference type="PhosphoSitePlus" id="P10067"/>
<dbReference type="PaxDb" id="10116-ENSRNOP00000060248"/>
<dbReference type="Ensembl" id="ENSRNOT00000050886.3">
    <property type="protein sequence ID" value="ENSRNOP00000051301.3"/>
    <property type="gene ID" value="ENSRNOG00000032219.6"/>
</dbReference>
<dbReference type="GeneID" id="24278"/>
<dbReference type="KEGG" id="rno:24278"/>
<dbReference type="UCSC" id="RGD:2422">
    <property type="organism name" value="rat"/>
</dbReference>
<dbReference type="AGR" id="RGD:2422"/>
<dbReference type="CTD" id="1421"/>
<dbReference type="RGD" id="2422">
    <property type="gene designation" value="Crygd"/>
</dbReference>
<dbReference type="eggNOG" id="ENOG502RXJY">
    <property type="taxonomic scope" value="Eukaryota"/>
</dbReference>
<dbReference type="GeneTree" id="ENSGT00940000163272"/>
<dbReference type="HOGENOM" id="CLU_081883_1_1_1"/>
<dbReference type="InParanoid" id="P10067"/>
<dbReference type="OrthoDB" id="521at9989"/>
<dbReference type="PhylomeDB" id="P10067"/>
<dbReference type="CD-CODE" id="4270DBEE">
    <property type="entry name" value="Synthetic Condensate 000246"/>
</dbReference>
<dbReference type="PRO" id="PR:P10067"/>
<dbReference type="Proteomes" id="UP000002494">
    <property type="component" value="Chromosome 9"/>
</dbReference>
<dbReference type="Bgee" id="ENSRNOG00000032219">
    <property type="expression patterns" value="Expressed in Ammon's horn and 3 other cell types or tissues"/>
</dbReference>
<dbReference type="ExpressionAtlas" id="P10067">
    <property type="expression patterns" value="baseline and differential"/>
</dbReference>
<dbReference type="GO" id="GO:0005737">
    <property type="term" value="C:cytoplasm"/>
    <property type="evidence" value="ECO:0000266"/>
    <property type="project" value="RGD"/>
</dbReference>
<dbReference type="GO" id="GO:0005634">
    <property type="term" value="C:nucleus"/>
    <property type="evidence" value="ECO:0000266"/>
    <property type="project" value="RGD"/>
</dbReference>
<dbReference type="GO" id="GO:0005212">
    <property type="term" value="F:structural constituent of eye lens"/>
    <property type="evidence" value="ECO:0000315"/>
    <property type="project" value="RGD"/>
</dbReference>
<dbReference type="GO" id="GO:0034614">
    <property type="term" value="P:cellular response to reactive oxygen species"/>
    <property type="evidence" value="ECO:0000266"/>
    <property type="project" value="RGD"/>
</dbReference>
<dbReference type="GO" id="GO:0001654">
    <property type="term" value="P:eye development"/>
    <property type="evidence" value="ECO:0000266"/>
    <property type="project" value="RGD"/>
</dbReference>
<dbReference type="GO" id="GO:0002088">
    <property type="term" value="P:lens development in camera-type eye"/>
    <property type="evidence" value="ECO:0000270"/>
    <property type="project" value="RGD"/>
</dbReference>
<dbReference type="GO" id="GO:0070306">
    <property type="term" value="P:lens fiber cell differentiation"/>
    <property type="evidence" value="ECO:0000314"/>
    <property type="project" value="RGD"/>
</dbReference>
<dbReference type="GO" id="GO:0043434">
    <property type="term" value="P:response to peptide hormone"/>
    <property type="evidence" value="ECO:0000270"/>
    <property type="project" value="RGD"/>
</dbReference>
<dbReference type="GO" id="GO:0007601">
    <property type="term" value="P:visual perception"/>
    <property type="evidence" value="ECO:0000266"/>
    <property type="project" value="RGD"/>
</dbReference>
<dbReference type="FunFam" id="2.60.20.10:FF:000001">
    <property type="entry name" value="Crystallin gamma S"/>
    <property type="match status" value="1"/>
</dbReference>
<dbReference type="FunFam" id="2.60.20.10:FF:000003">
    <property type="entry name" value="Crystallin gamma S"/>
    <property type="match status" value="1"/>
</dbReference>
<dbReference type="Gene3D" id="2.60.20.10">
    <property type="entry name" value="Crystallins"/>
    <property type="match status" value="2"/>
</dbReference>
<dbReference type="InterPro" id="IPR050252">
    <property type="entry name" value="Beta/Gamma-Crystallin"/>
</dbReference>
<dbReference type="InterPro" id="IPR001064">
    <property type="entry name" value="Beta/gamma_crystallin"/>
</dbReference>
<dbReference type="InterPro" id="IPR011024">
    <property type="entry name" value="G_crystallin-like"/>
</dbReference>
<dbReference type="PANTHER" id="PTHR11818">
    <property type="entry name" value="BETA/GAMMA CRYSTALLIN"/>
    <property type="match status" value="1"/>
</dbReference>
<dbReference type="PANTHER" id="PTHR11818:SF119">
    <property type="entry name" value="GAMMA-CRYSTALLIN D"/>
    <property type="match status" value="1"/>
</dbReference>
<dbReference type="Pfam" id="PF00030">
    <property type="entry name" value="Crystall"/>
    <property type="match status" value="2"/>
</dbReference>
<dbReference type="PRINTS" id="PR01367">
    <property type="entry name" value="BGCRYSTALLIN"/>
</dbReference>
<dbReference type="SMART" id="SM00247">
    <property type="entry name" value="XTALbg"/>
    <property type="match status" value="2"/>
</dbReference>
<dbReference type="SUPFAM" id="SSF49695">
    <property type="entry name" value="gamma-Crystallin-like"/>
    <property type="match status" value="1"/>
</dbReference>
<dbReference type="PROSITE" id="PS50915">
    <property type="entry name" value="CRYSTALLIN_BETA_GAMMA"/>
    <property type="match status" value="4"/>
</dbReference>
<organism>
    <name type="scientific">Rattus norvegicus</name>
    <name type="common">Rat</name>
    <dbReference type="NCBI Taxonomy" id="10116"/>
    <lineage>
        <taxon>Eukaryota</taxon>
        <taxon>Metazoa</taxon>
        <taxon>Chordata</taxon>
        <taxon>Craniata</taxon>
        <taxon>Vertebrata</taxon>
        <taxon>Euteleostomi</taxon>
        <taxon>Mammalia</taxon>
        <taxon>Eutheria</taxon>
        <taxon>Euarchontoglires</taxon>
        <taxon>Glires</taxon>
        <taxon>Rodentia</taxon>
        <taxon>Myomorpha</taxon>
        <taxon>Muroidea</taxon>
        <taxon>Muridae</taxon>
        <taxon>Murinae</taxon>
        <taxon>Rattus</taxon>
    </lineage>
</organism>
<reference key="1">
    <citation type="journal article" date="1986" name="J. Mol. Biol.">
        <title>Concerted and divergent evolution within the rat gamma-crystallin gene family.</title>
        <authorList>
            <person name="den Dunnen J.T."/>
            <person name="Moormann R.J.M."/>
            <person name="Lubsen N.H."/>
            <person name="Schoenmakers J.G.G."/>
        </authorList>
    </citation>
    <scope>NUCLEOTIDE SEQUENCE</scope>
</reference>
<reference key="2">
    <citation type="journal article" date="1989" name="Gene">
        <title>Nucleotide sequence of the rat gamma-crystallin gene region and comparison with an orthologous human region.</title>
        <authorList>
            <person name="den Dunnen J.T."/>
            <person name="van Neck J.W."/>
            <person name="Cremers F.P.M."/>
            <person name="Lubsen N.H."/>
            <person name="Schoenmakers J.G.G."/>
        </authorList>
    </citation>
    <scope>NUCLEOTIDE SEQUENCE [GENOMIC DNA]</scope>
</reference>
<reference key="3">
    <citation type="journal article" date="1994" name="Biochimie">
        <title>High level expression of rat gamma-D-crystallin in Escherichia coli.</title>
        <authorList>
            <person name="Ooki K."/>
            <person name="Amuro N."/>
            <person name="Shimizu Y."/>
            <person name="Okazaki T."/>
        </authorList>
    </citation>
    <scope>NUCLEOTIDE SEQUENCE [MRNA]</scope>
    <source>
        <strain>Sprague-Dawley</strain>
        <tissue>Lens</tissue>
    </source>
</reference>
<reference key="4">
    <citation type="journal article" date="2016" name="PLoS ONE">
        <title>Functional Role of gamma-Crystallin N in the Auditory Hindbrain.</title>
        <authorList>
            <person name="Hartwich H."/>
            <person name="Rosengauer E."/>
            <person name="Ruettiger L."/>
            <person name="Wilms V."/>
            <person name="Waterholter S.K."/>
            <person name="Nothwang H.G."/>
        </authorList>
    </citation>
    <scope>TISSUE SPECIFICITY</scope>
</reference>
<gene>
    <name type="primary">Crygd</name>
</gene>
<protein>
    <recommendedName>
        <fullName>Gamma-crystallin D</fullName>
    </recommendedName>
    <alternativeName>
        <fullName>Gamma-D-crystallin</fullName>
    </alternativeName>
    <alternativeName>
        <fullName>Gamma-crystallin 2-2</fullName>
    </alternativeName>
</protein>
<keyword id="KW-0273">Eye lens protein</keyword>
<keyword id="KW-1185">Reference proteome</keyword>
<keyword id="KW-0677">Repeat</keyword>
<feature type="chain" id="PRO_0000057592" description="Gamma-crystallin D">
    <location>
        <begin position="1"/>
        <end position="174"/>
    </location>
</feature>
<feature type="domain" description="Beta/gamma crystallin 'Greek key' 1" evidence="1">
    <location>
        <begin position="2"/>
        <end position="40"/>
    </location>
</feature>
<feature type="domain" description="Beta/gamma crystallin 'Greek key' 2" evidence="1">
    <location>
        <begin position="41"/>
        <end position="83"/>
    </location>
</feature>
<feature type="domain" description="Beta/gamma crystallin 'Greek key' 3" evidence="1">
    <location>
        <begin position="88"/>
        <end position="128"/>
    </location>
</feature>
<feature type="domain" description="Beta/gamma crystallin 'Greek key' 4" evidence="1">
    <location>
        <begin position="129"/>
        <end position="171"/>
    </location>
</feature>
<feature type="region of interest" description="Connecting peptide">
    <location>
        <begin position="84"/>
        <end position="87"/>
    </location>
</feature>